<dbReference type="EC" id="3.2.2.23" evidence="2"/>
<dbReference type="EC" id="4.2.99.18" evidence="2"/>
<dbReference type="EMBL" id="CR954253">
    <property type="protein sequence ID" value="CAI98311.1"/>
    <property type="molecule type" value="Genomic_DNA"/>
</dbReference>
<dbReference type="RefSeq" id="WP_011544083.1">
    <property type="nucleotide sequence ID" value="NC_008054.1"/>
</dbReference>
<dbReference type="SMR" id="Q1G9A3"/>
<dbReference type="STRING" id="390333.Ldb1511"/>
<dbReference type="KEGG" id="ldb:Ldb1511"/>
<dbReference type="PATRIC" id="fig|390333.13.peg.729"/>
<dbReference type="eggNOG" id="COG0266">
    <property type="taxonomic scope" value="Bacteria"/>
</dbReference>
<dbReference type="HOGENOM" id="CLU_038423_1_3_9"/>
<dbReference type="BioCyc" id="LDEL390333:LDB_RS06520-MONOMER"/>
<dbReference type="Proteomes" id="UP000001259">
    <property type="component" value="Chromosome"/>
</dbReference>
<dbReference type="GO" id="GO:0034039">
    <property type="term" value="F:8-oxo-7,8-dihydroguanine DNA N-glycosylase activity"/>
    <property type="evidence" value="ECO:0007669"/>
    <property type="project" value="TreeGrafter"/>
</dbReference>
<dbReference type="GO" id="GO:0140078">
    <property type="term" value="F:class I DNA-(apurinic or apyrimidinic site) endonuclease activity"/>
    <property type="evidence" value="ECO:0007669"/>
    <property type="project" value="UniProtKB-EC"/>
</dbReference>
<dbReference type="GO" id="GO:0003684">
    <property type="term" value="F:damaged DNA binding"/>
    <property type="evidence" value="ECO:0007669"/>
    <property type="project" value="InterPro"/>
</dbReference>
<dbReference type="GO" id="GO:0008270">
    <property type="term" value="F:zinc ion binding"/>
    <property type="evidence" value="ECO:0007669"/>
    <property type="project" value="UniProtKB-UniRule"/>
</dbReference>
<dbReference type="GO" id="GO:0006284">
    <property type="term" value="P:base-excision repair"/>
    <property type="evidence" value="ECO:0007669"/>
    <property type="project" value="InterPro"/>
</dbReference>
<dbReference type="CDD" id="cd08966">
    <property type="entry name" value="EcFpg-like_N"/>
    <property type="match status" value="1"/>
</dbReference>
<dbReference type="FunFam" id="1.10.8.50:FF:000003">
    <property type="entry name" value="Formamidopyrimidine-DNA glycosylase"/>
    <property type="match status" value="1"/>
</dbReference>
<dbReference type="Gene3D" id="1.10.8.50">
    <property type="match status" value="1"/>
</dbReference>
<dbReference type="Gene3D" id="3.20.190.10">
    <property type="entry name" value="MutM-like, N-terminal"/>
    <property type="match status" value="1"/>
</dbReference>
<dbReference type="HAMAP" id="MF_00103">
    <property type="entry name" value="Fapy_DNA_glycosyl"/>
    <property type="match status" value="1"/>
</dbReference>
<dbReference type="InterPro" id="IPR015886">
    <property type="entry name" value="DNA_glyclase/AP_lyase_DNA-bd"/>
</dbReference>
<dbReference type="InterPro" id="IPR020629">
    <property type="entry name" value="Formamido-pyr_DNA_Glyclase"/>
</dbReference>
<dbReference type="InterPro" id="IPR012319">
    <property type="entry name" value="FPG_cat"/>
</dbReference>
<dbReference type="InterPro" id="IPR035937">
    <property type="entry name" value="MutM-like_N-ter"/>
</dbReference>
<dbReference type="InterPro" id="IPR010979">
    <property type="entry name" value="Ribosomal_uS13-like_H2TH"/>
</dbReference>
<dbReference type="InterPro" id="IPR000214">
    <property type="entry name" value="Znf_DNA_glyclase/AP_lyase"/>
</dbReference>
<dbReference type="InterPro" id="IPR010663">
    <property type="entry name" value="Znf_FPG/IleRS"/>
</dbReference>
<dbReference type="NCBIfam" id="TIGR00577">
    <property type="entry name" value="fpg"/>
    <property type="match status" value="1"/>
</dbReference>
<dbReference type="NCBIfam" id="NF002211">
    <property type="entry name" value="PRK01103.1"/>
    <property type="match status" value="1"/>
</dbReference>
<dbReference type="PANTHER" id="PTHR22993">
    <property type="entry name" value="FORMAMIDOPYRIMIDINE-DNA GLYCOSYLASE"/>
    <property type="match status" value="1"/>
</dbReference>
<dbReference type="PANTHER" id="PTHR22993:SF9">
    <property type="entry name" value="FORMAMIDOPYRIMIDINE-DNA GLYCOSYLASE"/>
    <property type="match status" value="1"/>
</dbReference>
<dbReference type="Pfam" id="PF01149">
    <property type="entry name" value="Fapy_DNA_glyco"/>
    <property type="match status" value="1"/>
</dbReference>
<dbReference type="Pfam" id="PF06831">
    <property type="entry name" value="H2TH"/>
    <property type="match status" value="1"/>
</dbReference>
<dbReference type="Pfam" id="PF06827">
    <property type="entry name" value="zf-FPG_IleRS"/>
    <property type="match status" value="1"/>
</dbReference>
<dbReference type="SMART" id="SM00898">
    <property type="entry name" value="Fapy_DNA_glyco"/>
    <property type="match status" value="1"/>
</dbReference>
<dbReference type="SMART" id="SM01232">
    <property type="entry name" value="H2TH"/>
    <property type="match status" value="1"/>
</dbReference>
<dbReference type="SUPFAM" id="SSF57716">
    <property type="entry name" value="Glucocorticoid receptor-like (DNA-binding domain)"/>
    <property type="match status" value="1"/>
</dbReference>
<dbReference type="SUPFAM" id="SSF81624">
    <property type="entry name" value="N-terminal domain of MutM-like DNA repair proteins"/>
    <property type="match status" value="1"/>
</dbReference>
<dbReference type="SUPFAM" id="SSF46946">
    <property type="entry name" value="S13-like H2TH domain"/>
    <property type="match status" value="1"/>
</dbReference>
<dbReference type="PROSITE" id="PS51068">
    <property type="entry name" value="FPG_CAT"/>
    <property type="match status" value="1"/>
</dbReference>
<dbReference type="PROSITE" id="PS51066">
    <property type="entry name" value="ZF_FPG_2"/>
    <property type="match status" value="1"/>
</dbReference>
<evidence type="ECO:0000250" key="1"/>
<evidence type="ECO:0000255" key="2">
    <source>
        <dbReference type="HAMAP-Rule" id="MF_00103"/>
    </source>
</evidence>
<name>FPG_LACDA</name>
<proteinExistence type="inferred from homology"/>
<sequence length="273" mass="31043">MPEMPEVETVRRTLRPLVVGKTIDHVDIWYDKVITGDPETFKRELKGKTFTAVDRYAKFLLFRLGDLTVVSHLRMEGKYHLTTWDAPVDKHEHLQFAFTDGSSLRYADVRKFGRLQLVETGTEFQVTGLKNLGVEANSPEFRLDYFEKGLKKRSMNIKSLLMSQTLVAGLGNIYVDEVLWQSRINPLTPANELTKDQVKQLHSAINETIEEATKYGGTTVHSFLNAEGGAGHYQEKLKVYGKEGQPCPRCGEDFVKIKISGRGTTYCLHCQKR</sequence>
<gene>
    <name evidence="2" type="primary">mutM</name>
    <name evidence="2" type="synonym">fpg</name>
    <name type="ordered locus">Ldb1511</name>
</gene>
<organism>
    <name type="scientific">Lactobacillus delbrueckii subsp. bulgaricus (strain ATCC 11842 / DSM 20081 / BCRC 10696 / JCM 1002 / NBRC 13953 / NCIMB 11778 / NCTC 12712 / WDCM 00102 / Lb 14)</name>
    <dbReference type="NCBI Taxonomy" id="390333"/>
    <lineage>
        <taxon>Bacteria</taxon>
        <taxon>Bacillati</taxon>
        <taxon>Bacillota</taxon>
        <taxon>Bacilli</taxon>
        <taxon>Lactobacillales</taxon>
        <taxon>Lactobacillaceae</taxon>
        <taxon>Lactobacillus</taxon>
    </lineage>
</organism>
<keyword id="KW-0227">DNA damage</keyword>
<keyword id="KW-0234">DNA repair</keyword>
<keyword id="KW-0238">DNA-binding</keyword>
<keyword id="KW-0326">Glycosidase</keyword>
<keyword id="KW-0378">Hydrolase</keyword>
<keyword id="KW-0456">Lyase</keyword>
<keyword id="KW-0479">Metal-binding</keyword>
<keyword id="KW-0511">Multifunctional enzyme</keyword>
<keyword id="KW-1185">Reference proteome</keyword>
<keyword id="KW-0862">Zinc</keyword>
<keyword id="KW-0863">Zinc-finger</keyword>
<protein>
    <recommendedName>
        <fullName evidence="2">Formamidopyrimidine-DNA glycosylase</fullName>
        <shortName evidence="2">Fapy-DNA glycosylase</shortName>
        <ecNumber evidence="2">3.2.2.23</ecNumber>
    </recommendedName>
    <alternativeName>
        <fullName evidence="2">DNA-(apurinic or apyrimidinic site) lyase MutM</fullName>
        <shortName evidence="2">AP lyase MutM</shortName>
        <ecNumber evidence="2">4.2.99.18</ecNumber>
    </alternativeName>
</protein>
<reference key="1">
    <citation type="journal article" date="2006" name="Proc. Natl. Acad. Sci. U.S.A.">
        <title>The complete genome sequence of Lactobacillus bulgaricus reveals extensive and ongoing reductive evolution.</title>
        <authorList>
            <person name="van de Guchte M."/>
            <person name="Penaud S."/>
            <person name="Grimaldi C."/>
            <person name="Barbe V."/>
            <person name="Bryson K."/>
            <person name="Nicolas P."/>
            <person name="Robert C."/>
            <person name="Oztas S."/>
            <person name="Mangenot S."/>
            <person name="Couloux A."/>
            <person name="Loux V."/>
            <person name="Dervyn R."/>
            <person name="Bossy R."/>
            <person name="Bolotin A."/>
            <person name="Batto J.-M."/>
            <person name="Walunas T."/>
            <person name="Gibrat J.-F."/>
            <person name="Bessieres P."/>
            <person name="Weissenbach J."/>
            <person name="Ehrlich S.D."/>
            <person name="Maguin E."/>
        </authorList>
    </citation>
    <scope>NUCLEOTIDE SEQUENCE [LARGE SCALE GENOMIC DNA]</scope>
    <source>
        <strain>ATCC 11842 / DSM 20081 / BCRC 10696 / JCM 1002 / NBRC 13953 / NCIMB 11778 / NCTC 12712 / WDCM 00102 / Lb 14</strain>
    </source>
</reference>
<comment type="function">
    <text evidence="2">Involved in base excision repair of DNA damaged by oxidation or by mutagenic agents. Acts as a DNA glycosylase that recognizes and removes damaged bases. Has a preference for oxidized purines, such as 7,8-dihydro-8-oxoguanine (8-oxoG). Has AP (apurinic/apyrimidinic) lyase activity and introduces nicks in the DNA strand. Cleaves the DNA backbone by beta-delta elimination to generate a single-strand break at the site of the removed base with both 3'- and 5'-phosphates.</text>
</comment>
<comment type="catalytic activity">
    <reaction evidence="2">
        <text>Hydrolysis of DNA containing ring-opened 7-methylguanine residues, releasing 2,6-diamino-4-hydroxy-5-(N-methyl)formamidopyrimidine.</text>
        <dbReference type="EC" id="3.2.2.23"/>
    </reaction>
</comment>
<comment type="catalytic activity">
    <reaction evidence="2">
        <text>2'-deoxyribonucleotide-(2'-deoxyribose 5'-phosphate)-2'-deoxyribonucleotide-DNA = a 3'-end 2'-deoxyribonucleotide-(2,3-dehydro-2,3-deoxyribose 5'-phosphate)-DNA + a 5'-end 5'-phospho-2'-deoxyribonucleoside-DNA + H(+)</text>
        <dbReference type="Rhea" id="RHEA:66592"/>
        <dbReference type="Rhea" id="RHEA-COMP:13180"/>
        <dbReference type="Rhea" id="RHEA-COMP:16897"/>
        <dbReference type="Rhea" id="RHEA-COMP:17067"/>
        <dbReference type="ChEBI" id="CHEBI:15378"/>
        <dbReference type="ChEBI" id="CHEBI:136412"/>
        <dbReference type="ChEBI" id="CHEBI:157695"/>
        <dbReference type="ChEBI" id="CHEBI:167181"/>
        <dbReference type="EC" id="4.2.99.18"/>
    </reaction>
</comment>
<comment type="cofactor">
    <cofactor evidence="2">
        <name>Zn(2+)</name>
        <dbReference type="ChEBI" id="CHEBI:29105"/>
    </cofactor>
    <text evidence="2">Binds 1 zinc ion per subunit.</text>
</comment>
<comment type="subunit">
    <text evidence="2">Monomer.</text>
</comment>
<comment type="similarity">
    <text evidence="2">Belongs to the FPG family.</text>
</comment>
<feature type="initiator methionine" description="Removed" evidence="1">
    <location>
        <position position="1"/>
    </location>
</feature>
<feature type="chain" id="PRO_1000008708" description="Formamidopyrimidine-DNA glycosylase">
    <location>
        <begin position="2"/>
        <end position="273"/>
    </location>
</feature>
<feature type="zinc finger region" description="FPG-type" evidence="2">
    <location>
        <begin position="238"/>
        <end position="272"/>
    </location>
</feature>
<feature type="active site" description="Schiff-base intermediate with DNA" evidence="2">
    <location>
        <position position="2"/>
    </location>
</feature>
<feature type="active site" description="Proton donor" evidence="2">
    <location>
        <position position="3"/>
    </location>
</feature>
<feature type="active site" description="Proton donor; for beta-elimination activity" evidence="2">
    <location>
        <position position="58"/>
    </location>
</feature>
<feature type="active site" description="Proton donor; for delta-elimination activity" evidence="2">
    <location>
        <position position="262"/>
    </location>
</feature>
<feature type="binding site" evidence="2">
    <location>
        <position position="91"/>
    </location>
    <ligand>
        <name>DNA</name>
        <dbReference type="ChEBI" id="CHEBI:16991"/>
    </ligand>
</feature>
<feature type="binding site" evidence="2">
    <location>
        <position position="110"/>
    </location>
    <ligand>
        <name>DNA</name>
        <dbReference type="ChEBI" id="CHEBI:16991"/>
    </ligand>
</feature>
<feature type="binding site" evidence="2">
    <location>
        <position position="153"/>
    </location>
    <ligand>
        <name>DNA</name>
        <dbReference type="ChEBI" id="CHEBI:16991"/>
    </ligand>
</feature>
<accession>Q1G9A3</accession>